<evidence type="ECO:0000255" key="1">
    <source>
        <dbReference type="HAMAP-Rule" id="MF_01154"/>
    </source>
</evidence>
<accession>Q8FJ50</accession>
<organism>
    <name type="scientific">Escherichia coli O6:H1 (strain CFT073 / ATCC 700928 / UPEC)</name>
    <dbReference type="NCBI Taxonomy" id="199310"/>
    <lineage>
        <taxon>Bacteria</taxon>
        <taxon>Pseudomonadati</taxon>
        <taxon>Pseudomonadota</taxon>
        <taxon>Gammaproteobacteria</taxon>
        <taxon>Enterobacterales</taxon>
        <taxon>Enterobacteriaceae</taxon>
        <taxon>Escherichia</taxon>
    </lineage>
</organism>
<feature type="chain" id="PRO_0000169990" description="Curved DNA-binding protein">
    <location>
        <begin position="1"/>
        <end position="306"/>
    </location>
</feature>
<feature type="domain" description="J" evidence="1">
    <location>
        <begin position="5"/>
        <end position="69"/>
    </location>
</feature>
<name>CBPA_ECOL6</name>
<reference key="1">
    <citation type="journal article" date="2002" name="Proc. Natl. Acad. Sci. U.S.A.">
        <title>Extensive mosaic structure revealed by the complete genome sequence of uropathogenic Escherichia coli.</title>
        <authorList>
            <person name="Welch R.A."/>
            <person name="Burland V."/>
            <person name="Plunkett G. III"/>
            <person name="Redford P."/>
            <person name="Roesch P."/>
            <person name="Rasko D."/>
            <person name="Buckles E.L."/>
            <person name="Liou S.-R."/>
            <person name="Boutin A."/>
            <person name="Hackett J."/>
            <person name="Stroud D."/>
            <person name="Mayhew G.F."/>
            <person name="Rose D.J."/>
            <person name="Zhou S."/>
            <person name="Schwartz D.C."/>
            <person name="Perna N.T."/>
            <person name="Mobley H.L.T."/>
            <person name="Donnenberg M.S."/>
            <person name="Blattner F.R."/>
        </authorList>
    </citation>
    <scope>NUCLEOTIDE SEQUENCE [LARGE SCALE GENOMIC DNA]</scope>
    <source>
        <strain>CFT073 / ATCC 700928 / UPEC</strain>
    </source>
</reference>
<protein>
    <recommendedName>
        <fullName evidence="1">Curved DNA-binding protein</fullName>
    </recommendedName>
</protein>
<proteinExistence type="inferred from homology"/>
<comment type="function">
    <text evidence="1">DNA-binding protein that preferentially recognizes a curved DNA sequence. It is probably a functional analog of DnaJ; displays overlapping activities with DnaJ, but functions under different conditions, probably acting as a molecular chaperone in an adaptive response to environmental stresses other than heat shock. Lacks autonomous chaperone activity; binds native substrates and targets them for recognition by DnaK. Its activity is inhibited by the binding of CbpM.</text>
</comment>
<comment type="subcellular location">
    <subcellularLocation>
        <location evidence="1">Cytoplasm</location>
        <location evidence="1">Nucleoid</location>
    </subcellularLocation>
</comment>
<keyword id="KW-0143">Chaperone</keyword>
<keyword id="KW-0963">Cytoplasm</keyword>
<keyword id="KW-0238">DNA-binding</keyword>
<keyword id="KW-1185">Reference proteome</keyword>
<sequence>MELKDYYAIMGVKPTDDLKTIKTAYRRLARKYHPDVSKEPDAEARFKEVAEAWEVLSDEQRRAEYDQMWQHRNDPQFNRQFHHGDGQSFNAEDFDDIFSSIFGQHARQSRQRPATRGHDIEIEVAVFLEETLTEHKRTISYNLPVYNAFGMIEQEIPKTLNVKIPAGVGNGQRIRLKGQGTPGENGGPNGDLWLVIHIAPHPLFDIVGQDLEIVVPVSPWEAALGTKVTVPTLKESILLTIPPGSQAGQRLRVKGKGLVSKKQTGDLYAVLKIVMPPKPDENTAALWQQLADAQSSFDPRKDWGKA</sequence>
<dbReference type="EMBL" id="AE014075">
    <property type="protein sequence ID" value="AAN79604.1"/>
    <property type="molecule type" value="Genomic_DNA"/>
</dbReference>
<dbReference type="RefSeq" id="WP_000420625.1">
    <property type="nucleotide sequence ID" value="NZ_CP051263.1"/>
</dbReference>
<dbReference type="SMR" id="Q8FJ50"/>
<dbReference type="STRING" id="199310.c1136"/>
<dbReference type="KEGG" id="ecc:c1136"/>
<dbReference type="eggNOG" id="COG0484">
    <property type="taxonomic scope" value="Bacteria"/>
</dbReference>
<dbReference type="HOGENOM" id="CLU_017633_0_0_6"/>
<dbReference type="BioCyc" id="ECOL199310:C1136-MONOMER"/>
<dbReference type="Proteomes" id="UP000001410">
    <property type="component" value="Chromosome"/>
</dbReference>
<dbReference type="GO" id="GO:0005737">
    <property type="term" value="C:cytoplasm"/>
    <property type="evidence" value="ECO:0007669"/>
    <property type="project" value="UniProtKB-UniRule"/>
</dbReference>
<dbReference type="GO" id="GO:0009295">
    <property type="term" value="C:nucleoid"/>
    <property type="evidence" value="ECO:0007669"/>
    <property type="project" value="UniProtKB-SubCell"/>
</dbReference>
<dbReference type="GO" id="GO:0003681">
    <property type="term" value="F:bent DNA binding"/>
    <property type="evidence" value="ECO:0007669"/>
    <property type="project" value="UniProtKB-UniRule"/>
</dbReference>
<dbReference type="GO" id="GO:0051082">
    <property type="term" value="F:unfolded protein binding"/>
    <property type="evidence" value="ECO:0007669"/>
    <property type="project" value="InterPro"/>
</dbReference>
<dbReference type="GO" id="GO:0051085">
    <property type="term" value="P:chaperone cofactor-dependent protein refolding"/>
    <property type="evidence" value="ECO:0007669"/>
    <property type="project" value="TreeGrafter"/>
</dbReference>
<dbReference type="GO" id="GO:0042026">
    <property type="term" value="P:protein refolding"/>
    <property type="evidence" value="ECO:0007669"/>
    <property type="project" value="TreeGrafter"/>
</dbReference>
<dbReference type="CDD" id="cd06257">
    <property type="entry name" value="DnaJ"/>
    <property type="match status" value="1"/>
</dbReference>
<dbReference type="CDD" id="cd10747">
    <property type="entry name" value="DnaJ_C"/>
    <property type="match status" value="1"/>
</dbReference>
<dbReference type="FunFam" id="1.10.287.110:FF:000013">
    <property type="entry name" value="Curved DNA-binding protein"/>
    <property type="match status" value="1"/>
</dbReference>
<dbReference type="FunFam" id="2.60.260.20:FF:000008">
    <property type="entry name" value="Curved DNA-binding protein"/>
    <property type="match status" value="1"/>
</dbReference>
<dbReference type="FunFam" id="2.60.260.20:FF:000013">
    <property type="entry name" value="DnaJ subfamily B member 11"/>
    <property type="match status" value="1"/>
</dbReference>
<dbReference type="Gene3D" id="1.10.287.110">
    <property type="entry name" value="DnaJ domain"/>
    <property type="match status" value="1"/>
</dbReference>
<dbReference type="Gene3D" id="1.20.5.460">
    <property type="entry name" value="Single helix bin"/>
    <property type="match status" value="1"/>
</dbReference>
<dbReference type="Gene3D" id="2.60.260.20">
    <property type="entry name" value="Urease metallochaperone UreE, N-terminal domain"/>
    <property type="match status" value="2"/>
</dbReference>
<dbReference type="HAMAP" id="MF_01154">
    <property type="entry name" value="CbpA"/>
    <property type="match status" value="1"/>
</dbReference>
<dbReference type="InterPro" id="IPR023859">
    <property type="entry name" value="DNA-bd_curved-DNA"/>
</dbReference>
<dbReference type="InterPro" id="IPR002939">
    <property type="entry name" value="DnaJ_C"/>
</dbReference>
<dbReference type="InterPro" id="IPR001623">
    <property type="entry name" value="DnaJ_domain"/>
</dbReference>
<dbReference type="InterPro" id="IPR018253">
    <property type="entry name" value="DnaJ_domain_CS"/>
</dbReference>
<dbReference type="InterPro" id="IPR008971">
    <property type="entry name" value="HSP40/DnaJ_pept-bd"/>
</dbReference>
<dbReference type="InterPro" id="IPR036869">
    <property type="entry name" value="J_dom_sf"/>
</dbReference>
<dbReference type="NCBIfam" id="NF007618">
    <property type="entry name" value="PRK10266.1"/>
    <property type="match status" value="1"/>
</dbReference>
<dbReference type="PANTHER" id="PTHR43096">
    <property type="entry name" value="DNAJ HOMOLOG 1, MITOCHONDRIAL-RELATED"/>
    <property type="match status" value="1"/>
</dbReference>
<dbReference type="PANTHER" id="PTHR43096:SF52">
    <property type="entry name" value="DNAJ HOMOLOG 1, MITOCHONDRIAL-RELATED"/>
    <property type="match status" value="1"/>
</dbReference>
<dbReference type="Pfam" id="PF00226">
    <property type="entry name" value="DnaJ"/>
    <property type="match status" value="1"/>
</dbReference>
<dbReference type="Pfam" id="PF01556">
    <property type="entry name" value="DnaJ_C"/>
    <property type="match status" value="1"/>
</dbReference>
<dbReference type="PRINTS" id="PR00625">
    <property type="entry name" value="JDOMAIN"/>
</dbReference>
<dbReference type="SMART" id="SM00271">
    <property type="entry name" value="DnaJ"/>
    <property type="match status" value="1"/>
</dbReference>
<dbReference type="SUPFAM" id="SSF46565">
    <property type="entry name" value="Chaperone J-domain"/>
    <property type="match status" value="1"/>
</dbReference>
<dbReference type="SUPFAM" id="SSF49493">
    <property type="entry name" value="HSP40/DnaJ peptide-binding domain"/>
    <property type="match status" value="2"/>
</dbReference>
<dbReference type="PROSITE" id="PS00636">
    <property type="entry name" value="DNAJ_1"/>
    <property type="match status" value="1"/>
</dbReference>
<dbReference type="PROSITE" id="PS50076">
    <property type="entry name" value="DNAJ_2"/>
    <property type="match status" value="1"/>
</dbReference>
<gene>
    <name evidence="1" type="primary">cbpA</name>
    <name type="ordered locus">c1136</name>
</gene>